<organism>
    <name type="scientific">Salmonella typhimurium (strain LT2 / SGSC1412 / ATCC 700720)</name>
    <dbReference type="NCBI Taxonomy" id="99287"/>
    <lineage>
        <taxon>Bacteria</taxon>
        <taxon>Pseudomonadati</taxon>
        <taxon>Pseudomonadota</taxon>
        <taxon>Gammaproteobacteria</taxon>
        <taxon>Enterobacterales</taxon>
        <taxon>Enterobacteriaceae</taxon>
        <taxon>Salmonella</taxon>
    </lineage>
</organism>
<gene>
    <name type="primary">ssaO</name>
    <name type="ordered locus">STM1416</name>
</gene>
<accession>P74858</accession>
<proteinExistence type="predicted"/>
<sequence>METLLEIIARREKQLRGKLTVLDQQQQAIITEQQICQTRALAVSTRLKELMGWQGTLSCHLLLDKKQQMAGLFTQAQSFLTQRQQLENQYQQLVSRRSELQKNFNALMKKKEKITMVLSDAYYQS</sequence>
<dbReference type="EMBL" id="Y09357">
    <property type="protein sequence ID" value="CAA70538.1"/>
    <property type="molecule type" value="Genomic_DNA"/>
</dbReference>
<dbReference type="EMBL" id="AE006468">
    <property type="protein sequence ID" value="AAL20340.1"/>
    <property type="molecule type" value="Genomic_DNA"/>
</dbReference>
<dbReference type="RefSeq" id="NP_460381.1">
    <property type="nucleotide sequence ID" value="NC_003197.2"/>
</dbReference>
<dbReference type="RefSeq" id="WP_000449089.1">
    <property type="nucleotide sequence ID" value="NC_003197.2"/>
</dbReference>
<dbReference type="SMR" id="P74858"/>
<dbReference type="STRING" id="99287.STM1416"/>
<dbReference type="PaxDb" id="99287-STM1416"/>
<dbReference type="GeneID" id="1252934"/>
<dbReference type="KEGG" id="stm:STM1416"/>
<dbReference type="PATRIC" id="fig|99287.12.peg.1500"/>
<dbReference type="HOGENOM" id="CLU_1991106_0_0_6"/>
<dbReference type="OMA" id="LNDAYYQ"/>
<dbReference type="BioCyc" id="SENT99287:STM1416-MONOMER"/>
<dbReference type="Proteomes" id="UP000001014">
    <property type="component" value="Chromosome"/>
</dbReference>
<dbReference type="GO" id="GO:0015031">
    <property type="term" value="P:protein transport"/>
    <property type="evidence" value="ECO:0007669"/>
    <property type="project" value="UniProtKB-KW"/>
</dbReference>
<dbReference type="NCBIfam" id="NF011879">
    <property type="entry name" value="PRK15352.1"/>
    <property type="match status" value="1"/>
</dbReference>
<reference key="1">
    <citation type="journal article" date="1997" name="Mol. Microbiol.">
        <title>Functional analysis of ssaJ and the ssaK/U operon, 13 genes encoding components of the type III secretion apparatus of Salmonella pathogenicity island 2.</title>
        <authorList>
            <person name="Hensel M."/>
            <person name="Shea J.E."/>
            <person name="Raupach B."/>
            <person name="Monack D."/>
            <person name="Falkow S."/>
            <person name="Gleeson C."/>
            <person name="Kubo T."/>
            <person name="Holden D.W."/>
        </authorList>
    </citation>
    <scope>NUCLEOTIDE SEQUENCE [GENOMIC DNA]</scope>
    <source>
        <strain>LT2</strain>
    </source>
</reference>
<reference key="2">
    <citation type="journal article" date="2001" name="Nature">
        <title>Complete genome sequence of Salmonella enterica serovar Typhimurium LT2.</title>
        <authorList>
            <person name="McClelland M."/>
            <person name="Sanderson K.E."/>
            <person name="Spieth J."/>
            <person name="Clifton S.W."/>
            <person name="Latreille P."/>
            <person name="Courtney L."/>
            <person name="Porwollik S."/>
            <person name="Ali J."/>
            <person name="Dante M."/>
            <person name="Du F."/>
            <person name="Hou S."/>
            <person name="Layman D."/>
            <person name="Leonard S."/>
            <person name="Nguyen C."/>
            <person name="Scott K."/>
            <person name="Holmes A."/>
            <person name="Grewal N."/>
            <person name="Mulvaney E."/>
            <person name="Ryan E."/>
            <person name="Sun H."/>
            <person name="Florea L."/>
            <person name="Miller W."/>
            <person name="Stoneking T."/>
            <person name="Nhan M."/>
            <person name="Waterston R."/>
            <person name="Wilson R.K."/>
        </authorList>
    </citation>
    <scope>NUCLEOTIDE SEQUENCE [LARGE SCALE GENOMIC DNA]</scope>
    <source>
        <strain>LT2 / SGSC1412 / ATCC 700720</strain>
    </source>
</reference>
<feature type="chain" id="PRO_0000072206" description="Secretion system apparatus protein SsaO">
    <location>
        <begin position="1"/>
        <end position="125"/>
    </location>
</feature>
<keyword id="KW-0653">Protein transport</keyword>
<keyword id="KW-1185">Reference proteome</keyword>
<keyword id="KW-0813">Transport</keyword>
<name>SSAO_SALTY</name>
<protein>
    <recommendedName>
        <fullName>Secretion system apparatus protein SsaO</fullName>
    </recommendedName>
</protein>